<comment type="function">
    <text evidence="1">PhoP-regulated transcription is redox-sensitive, being activated when the periplasm becomes more reducing. MgrB acts between DsbA/DsbB and PhoP/PhoQ in this pathway. Represses PhoP/PhoQ signaling, possibly by binding to the periplasmic domain of PhoQ, altering its activity and that of downstream effector PhoP.</text>
</comment>
<comment type="subunit">
    <text evidence="1">May form homooligomers. Probably interacts with the periplasmic domain of PhoQ.</text>
</comment>
<comment type="subcellular location">
    <subcellularLocation>
        <location evidence="1">Cell inner membrane</location>
        <topology evidence="1">Single-pass membrane protein</topology>
    </subcellularLocation>
</comment>
<comment type="similarity">
    <text evidence="1">Belongs to the MgrB family.</text>
</comment>
<sequence>MKKFRWVVLGIVVVVCLLLWAQVFNIMCDQDVQFFSGICAINKFIPW</sequence>
<gene>
    <name evidence="1" type="primary">mgrB</name>
    <name type="ordered locus">SeAg_B1291</name>
</gene>
<organism>
    <name type="scientific">Salmonella agona (strain SL483)</name>
    <dbReference type="NCBI Taxonomy" id="454166"/>
    <lineage>
        <taxon>Bacteria</taxon>
        <taxon>Pseudomonadati</taxon>
        <taxon>Pseudomonadota</taxon>
        <taxon>Gammaproteobacteria</taxon>
        <taxon>Enterobacterales</taxon>
        <taxon>Enterobacteriaceae</taxon>
        <taxon>Salmonella</taxon>
    </lineage>
</organism>
<protein>
    <recommendedName>
        <fullName evidence="1">PhoP/PhoQ regulator MgrB</fullName>
    </recommendedName>
</protein>
<feature type="chain" id="PRO_1000201571" description="PhoP/PhoQ regulator MgrB">
    <location>
        <begin position="1"/>
        <end position="47"/>
    </location>
</feature>
<feature type="transmembrane region" description="Helical" evidence="1">
    <location>
        <begin position="6"/>
        <end position="26"/>
    </location>
</feature>
<dbReference type="EMBL" id="CP001138">
    <property type="protein sequence ID" value="ACH49269.1"/>
    <property type="molecule type" value="Genomic_DNA"/>
</dbReference>
<dbReference type="RefSeq" id="WP_000714547.1">
    <property type="nucleotide sequence ID" value="NC_011149.1"/>
</dbReference>
<dbReference type="GeneID" id="66756315"/>
<dbReference type="KEGG" id="sea:SeAg_B1291"/>
<dbReference type="HOGENOM" id="CLU_208030_1_0_6"/>
<dbReference type="Proteomes" id="UP000008819">
    <property type="component" value="Chromosome"/>
</dbReference>
<dbReference type="GO" id="GO:0005886">
    <property type="term" value="C:plasma membrane"/>
    <property type="evidence" value="ECO:0007669"/>
    <property type="project" value="UniProtKB-SubCell"/>
</dbReference>
<dbReference type="GO" id="GO:0070298">
    <property type="term" value="P:negative regulation of phosphorelay signal transduction system"/>
    <property type="evidence" value="ECO:0007669"/>
    <property type="project" value="UniProtKB-UniRule"/>
</dbReference>
<dbReference type="HAMAP" id="MF_01596">
    <property type="entry name" value="MgrB"/>
    <property type="match status" value="1"/>
</dbReference>
<dbReference type="InterPro" id="IPR020907">
    <property type="entry name" value="MgrB"/>
</dbReference>
<dbReference type="NCBIfam" id="NF007635">
    <property type="entry name" value="PRK10299.1"/>
    <property type="match status" value="1"/>
</dbReference>
<dbReference type="Pfam" id="PF13998">
    <property type="entry name" value="MgrB"/>
    <property type="match status" value="1"/>
</dbReference>
<name>MGRB_SALA4</name>
<keyword id="KW-0997">Cell inner membrane</keyword>
<keyword id="KW-1003">Cell membrane</keyword>
<keyword id="KW-0472">Membrane</keyword>
<keyword id="KW-0812">Transmembrane</keyword>
<keyword id="KW-1133">Transmembrane helix</keyword>
<reference key="1">
    <citation type="journal article" date="2011" name="J. Bacteriol.">
        <title>Comparative genomics of 28 Salmonella enterica isolates: evidence for CRISPR-mediated adaptive sublineage evolution.</title>
        <authorList>
            <person name="Fricke W.F."/>
            <person name="Mammel M.K."/>
            <person name="McDermott P.F."/>
            <person name="Tartera C."/>
            <person name="White D.G."/>
            <person name="Leclerc J.E."/>
            <person name="Ravel J."/>
            <person name="Cebula T.A."/>
        </authorList>
    </citation>
    <scope>NUCLEOTIDE SEQUENCE [LARGE SCALE GENOMIC DNA]</scope>
    <source>
        <strain>SL483</strain>
    </source>
</reference>
<accession>B5F3Q2</accession>
<evidence type="ECO:0000255" key="1">
    <source>
        <dbReference type="HAMAP-Rule" id="MF_01596"/>
    </source>
</evidence>
<proteinExistence type="inferred from homology"/>